<reference key="1">
    <citation type="journal article" date="1998" name="Science">
        <title>Genome sequence of the nematode C. elegans: a platform for investigating biology.</title>
        <authorList>
            <consortium name="The C. elegans sequencing consortium"/>
        </authorList>
    </citation>
    <scope>NUCLEOTIDE SEQUENCE [LARGE SCALE GENOMIC DNA]</scope>
    <source>
        <strain>Bristol N2</strain>
    </source>
</reference>
<sequence>MNLTASVSMVYDGGHYIVVDSPSATDVHSKELMLKGIASRNIVPGEIQYVVTTHGHPDHFGQGNFFPNARHFFGSYEYSDTNFISTELHTKDIMQLTKNVQLWNTPGHTAQDVTVMVHNVSCCGIIAVAGDLFYNEEDANEAAGIWFQEAWNPIIGKISRNKVICYADYVIPGHGKLFRITQEMKNGADCFTKYETTLDDNKTVQSSPQFQNSIEQVIRKPAETLFSSANSVSFNYIGSPSTSASSSTRAIETTTAYSDSTTTTFYTVDLTAETPSTLESDIIFNSQENLPPLGMKIKKNANYIELPDLSGDVHPMVQSFAKKVSDVLKQPQNEAEISKMMPHLKKWQTTLTKLWKQYMNAN</sequence>
<dbReference type="EMBL" id="FO080310">
    <property type="protein sequence ID" value="CCD62775.1"/>
    <property type="molecule type" value="Genomic_DNA"/>
</dbReference>
<dbReference type="PIR" id="T15395">
    <property type="entry name" value="T15395"/>
</dbReference>
<dbReference type="RefSeq" id="NP_508918.2">
    <property type="nucleotide sequence ID" value="NM_076517.4"/>
</dbReference>
<dbReference type="SMR" id="Q11123"/>
<dbReference type="PaxDb" id="6239-C03F11.2"/>
<dbReference type="EnsemblMetazoa" id="C03F11.2.1">
    <property type="protein sequence ID" value="C03F11.2.1"/>
    <property type="gene ID" value="WBGene00015388"/>
</dbReference>
<dbReference type="GeneID" id="182165"/>
<dbReference type="KEGG" id="cel:CELE_C03F11.2"/>
<dbReference type="UCSC" id="C03F11.2">
    <property type="organism name" value="c. elegans"/>
</dbReference>
<dbReference type="AGR" id="WB:WBGene00015388"/>
<dbReference type="CTD" id="182165"/>
<dbReference type="WormBase" id="C03F11.2">
    <property type="protein sequence ID" value="CE35379"/>
    <property type="gene ID" value="WBGene00015388"/>
</dbReference>
<dbReference type="eggNOG" id="KOG4736">
    <property type="taxonomic scope" value="Eukaryota"/>
</dbReference>
<dbReference type="HOGENOM" id="CLU_790478_0_0_1"/>
<dbReference type="InParanoid" id="Q11123"/>
<dbReference type="OMA" id="ICYADYV"/>
<dbReference type="OrthoDB" id="10250730at2759"/>
<dbReference type="PhylomeDB" id="Q11123"/>
<dbReference type="PRO" id="PR:Q11123"/>
<dbReference type="Proteomes" id="UP000001940">
    <property type="component" value="Chromosome X"/>
</dbReference>
<dbReference type="Bgee" id="WBGene00015388">
    <property type="expression patterns" value="Expressed in larva and 1 other cell type or tissue"/>
</dbReference>
<dbReference type="CDD" id="cd07711">
    <property type="entry name" value="MBLAC1-like_MBL-fold"/>
    <property type="match status" value="1"/>
</dbReference>
<dbReference type="Gene3D" id="3.60.15.10">
    <property type="entry name" value="Ribonuclease Z/Hydroxyacylglutathione hydrolase-like"/>
    <property type="match status" value="1"/>
</dbReference>
<dbReference type="InterPro" id="IPR039344">
    <property type="entry name" value="MBLAC1"/>
</dbReference>
<dbReference type="InterPro" id="IPR001279">
    <property type="entry name" value="Metallo-B-lactamas"/>
</dbReference>
<dbReference type="InterPro" id="IPR036866">
    <property type="entry name" value="RibonucZ/Hydroxyglut_hydro"/>
</dbReference>
<dbReference type="PANTHER" id="PTHR23200">
    <property type="entry name" value="METALLO-BETA-LACTAMASE DOMAIN-CONTAINING PROTEIN 1"/>
    <property type="match status" value="1"/>
</dbReference>
<dbReference type="PANTHER" id="PTHR23200:SF39">
    <property type="entry name" value="PROTEIN CBG14679"/>
    <property type="match status" value="1"/>
</dbReference>
<dbReference type="Pfam" id="PF00753">
    <property type="entry name" value="Lactamase_B"/>
    <property type="match status" value="1"/>
</dbReference>
<dbReference type="SMART" id="SM00849">
    <property type="entry name" value="Lactamase_B"/>
    <property type="match status" value="1"/>
</dbReference>
<dbReference type="SUPFAM" id="SSF56281">
    <property type="entry name" value="Metallo-hydrolase/oxidoreductase"/>
    <property type="match status" value="1"/>
</dbReference>
<organism>
    <name type="scientific">Caenorhabditis elegans</name>
    <dbReference type="NCBI Taxonomy" id="6239"/>
    <lineage>
        <taxon>Eukaryota</taxon>
        <taxon>Metazoa</taxon>
        <taxon>Ecdysozoa</taxon>
        <taxon>Nematoda</taxon>
        <taxon>Chromadorea</taxon>
        <taxon>Rhabditida</taxon>
        <taxon>Rhabditina</taxon>
        <taxon>Rhabditomorpha</taxon>
        <taxon>Rhabditoidea</taxon>
        <taxon>Rhabditidae</taxon>
        <taxon>Peloderinae</taxon>
        <taxon>Caenorhabditis</taxon>
    </lineage>
</organism>
<keyword id="KW-1185">Reference proteome</keyword>
<name>YX12_CAEEL</name>
<accession>Q11123</accession>
<gene>
    <name type="ORF">C03F11.2</name>
</gene>
<feature type="chain" id="PRO_0000065132" description="Uncharacterized protein C03F11.2">
    <location>
        <begin position="1"/>
        <end position="362"/>
    </location>
</feature>
<proteinExistence type="predicted"/>
<protein>
    <recommendedName>
        <fullName>Uncharacterized protein C03F11.2</fullName>
    </recommendedName>
</protein>